<evidence type="ECO:0000255" key="1">
    <source>
        <dbReference type="HAMAP-Rule" id="MF_00402"/>
    </source>
</evidence>
<evidence type="ECO:0000305" key="2"/>
<gene>
    <name evidence="1" type="primary">rplS</name>
    <name type="ordered locus">Dalk_4644</name>
</gene>
<feature type="chain" id="PRO_1000193821" description="Large ribosomal subunit protein bL19">
    <location>
        <begin position="1"/>
        <end position="114"/>
    </location>
</feature>
<organism>
    <name type="scientific">Desulfatibacillum aliphaticivorans</name>
    <dbReference type="NCBI Taxonomy" id="218208"/>
    <lineage>
        <taxon>Bacteria</taxon>
        <taxon>Pseudomonadati</taxon>
        <taxon>Thermodesulfobacteriota</taxon>
        <taxon>Desulfobacteria</taxon>
        <taxon>Desulfobacterales</taxon>
        <taxon>Desulfatibacillaceae</taxon>
        <taxon>Desulfatibacillum</taxon>
    </lineage>
</organism>
<proteinExistence type="inferred from homology"/>
<accession>B8FNP1</accession>
<keyword id="KW-1185">Reference proteome</keyword>
<keyword id="KW-0687">Ribonucleoprotein</keyword>
<keyword id="KW-0689">Ribosomal protein</keyword>
<reference key="1">
    <citation type="journal article" date="2012" name="Environ. Microbiol.">
        <title>The genome sequence of Desulfatibacillum alkenivorans AK-01: a blueprint for anaerobic alkane oxidation.</title>
        <authorList>
            <person name="Callaghan A.V."/>
            <person name="Morris B.E."/>
            <person name="Pereira I.A."/>
            <person name="McInerney M.J."/>
            <person name="Austin R.N."/>
            <person name="Groves J.T."/>
            <person name="Kukor J.J."/>
            <person name="Suflita J.M."/>
            <person name="Young L.Y."/>
            <person name="Zylstra G.J."/>
            <person name="Wawrik B."/>
        </authorList>
    </citation>
    <scope>NUCLEOTIDE SEQUENCE [LARGE SCALE GENOMIC DNA]</scope>
    <source>
        <strain>AK-01</strain>
    </source>
</reference>
<comment type="function">
    <text evidence="1">This protein is located at the 30S-50S ribosomal subunit interface and may play a role in the structure and function of the aminoacyl-tRNA binding site.</text>
</comment>
<comment type="similarity">
    <text evidence="1">Belongs to the bacterial ribosomal protein bL19 family.</text>
</comment>
<sequence>MDVIKQIEQEQMRYDLPQFEAGDTVNVHVRIIEGTKERLQAFKGVVIAKKSGTTNATFTVRKVSYGVGVERVFHAHSPSIDHIEVVSRGKVRRAKLYYLRKLRGKAARIKEKRF</sequence>
<dbReference type="EMBL" id="CP001322">
    <property type="protein sequence ID" value="ACL06322.1"/>
    <property type="molecule type" value="Genomic_DNA"/>
</dbReference>
<dbReference type="RefSeq" id="WP_015949361.1">
    <property type="nucleotide sequence ID" value="NC_011768.1"/>
</dbReference>
<dbReference type="SMR" id="B8FNP1"/>
<dbReference type="KEGG" id="dal:Dalk_4644"/>
<dbReference type="eggNOG" id="COG0335">
    <property type="taxonomic scope" value="Bacteria"/>
</dbReference>
<dbReference type="HOGENOM" id="CLU_103507_2_2_7"/>
<dbReference type="Proteomes" id="UP000000739">
    <property type="component" value="Chromosome"/>
</dbReference>
<dbReference type="GO" id="GO:0022625">
    <property type="term" value="C:cytosolic large ribosomal subunit"/>
    <property type="evidence" value="ECO:0007669"/>
    <property type="project" value="TreeGrafter"/>
</dbReference>
<dbReference type="GO" id="GO:0003735">
    <property type="term" value="F:structural constituent of ribosome"/>
    <property type="evidence" value="ECO:0007669"/>
    <property type="project" value="InterPro"/>
</dbReference>
<dbReference type="GO" id="GO:0006412">
    <property type="term" value="P:translation"/>
    <property type="evidence" value="ECO:0007669"/>
    <property type="project" value="UniProtKB-UniRule"/>
</dbReference>
<dbReference type="FunFam" id="2.30.30.790:FF:000001">
    <property type="entry name" value="50S ribosomal protein L19"/>
    <property type="match status" value="1"/>
</dbReference>
<dbReference type="Gene3D" id="2.30.30.790">
    <property type="match status" value="1"/>
</dbReference>
<dbReference type="HAMAP" id="MF_00402">
    <property type="entry name" value="Ribosomal_bL19"/>
    <property type="match status" value="1"/>
</dbReference>
<dbReference type="InterPro" id="IPR001857">
    <property type="entry name" value="Ribosomal_bL19"/>
</dbReference>
<dbReference type="InterPro" id="IPR018257">
    <property type="entry name" value="Ribosomal_bL19_CS"/>
</dbReference>
<dbReference type="InterPro" id="IPR038657">
    <property type="entry name" value="Ribosomal_bL19_sf"/>
</dbReference>
<dbReference type="InterPro" id="IPR008991">
    <property type="entry name" value="Translation_prot_SH3-like_sf"/>
</dbReference>
<dbReference type="NCBIfam" id="TIGR01024">
    <property type="entry name" value="rplS_bact"/>
    <property type="match status" value="1"/>
</dbReference>
<dbReference type="PANTHER" id="PTHR15680:SF9">
    <property type="entry name" value="LARGE RIBOSOMAL SUBUNIT PROTEIN BL19M"/>
    <property type="match status" value="1"/>
</dbReference>
<dbReference type="PANTHER" id="PTHR15680">
    <property type="entry name" value="RIBOSOMAL PROTEIN L19"/>
    <property type="match status" value="1"/>
</dbReference>
<dbReference type="Pfam" id="PF01245">
    <property type="entry name" value="Ribosomal_L19"/>
    <property type="match status" value="1"/>
</dbReference>
<dbReference type="PIRSF" id="PIRSF002191">
    <property type="entry name" value="Ribosomal_L19"/>
    <property type="match status" value="1"/>
</dbReference>
<dbReference type="PRINTS" id="PR00061">
    <property type="entry name" value="RIBOSOMALL19"/>
</dbReference>
<dbReference type="SUPFAM" id="SSF50104">
    <property type="entry name" value="Translation proteins SH3-like domain"/>
    <property type="match status" value="1"/>
</dbReference>
<dbReference type="PROSITE" id="PS01015">
    <property type="entry name" value="RIBOSOMAL_L19"/>
    <property type="match status" value="1"/>
</dbReference>
<protein>
    <recommendedName>
        <fullName evidence="1">Large ribosomal subunit protein bL19</fullName>
    </recommendedName>
    <alternativeName>
        <fullName evidence="2">50S ribosomal protein L19</fullName>
    </alternativeName>
</protein>
<name>RL19_DESAL</name>